<gene>
    <name type="primary">phaP</name>
    <name type="ordered locus">HFX_5219</name>
    <name type="ORF">BM92_17940</name>
    <name type="ORF">C439_00150</name>
</gene>
<keyword id="KW-0614">Plasmid</keyword>
<comment type="function">
    <text evidence="1">Polyhydroxyalkanoate (PHA) granule structural protein. Important for PHA granule formation and separation, and for cell growth.</text>
</comment>
<comment type="subcellular location">
    <subcellularLocation>
        <location evidence="1">Cytoplasmic granule</location>
    </subcellularLocation>
</comment>
<comment type="disruption phenotype">
    <text evidence="1">Deletion mutant is defective in both PHA biosynthesis and cell growth. The number of PHA granules is significantly lower.</text>
</comment>
<organism>
    <name type="scientific">Haloferax mediterranei (strain ATCC 33500 / DSM 1411 / JCM 8866 / NBRC 14739 / NCIMB 2177 / R-4)</name>
    <name type="common">Halobacterium mediterranei</name>
    <dbReference type="NCBI Taxonomy" id="523841"/>
    <lineage>
        <taxon>Archaea</taxon>
        <taxon>Methanobacteriati</taxon>
        <taxon>Methanobacteriota</taxon>
        <taxon>Stenosarchaea group</taxon>
        <taxon>Halobacteria</taxon>
        <taxon>Halobacteriales</taxon>
        <taxon>Haloferacaceae</taxon>
        <taxon>Haloferax</taxon>
    </lineage>
</organism>
<evidence type="ECO:0000269" key="1">
    <source>
    </source>
</evidence>
<name>PHAP_HALMT</name>
<sequence length="154" mass="17864">MSEQANPFTQFFQLQRRSIEQSQRSMHQGIEFQKQVTRMMVDGMKAQQSVSRKGTDFARTAVKSYFEMMDSSVPGDNRMYADVKDAMDEQFDSIDEMTEQTWDVMEESFEENADAMDEIMEQSLEYLDDATEVYLEGLQEIEETSAQVTPDTPE</sequence>
<protein>
    <recommendedName>
        <fullName>PHA granule-associated protein PhaP</fullName>
    </recommendedName>
    <alternativeName>
        <fullName>Major haloarchaeal phasin</fullName>
    </alternativeName>
</protein>
<feature type="chain" id="PRO_0000430463" description="PHA granule-associated protein PhaP">
    <location>
        <begin position="1"/>
        <end position="154"/>
    </location>
</feature>
<geneLocation type="plasmid">
    <name>HMPLAS2</name>
</geneLocation>
<geneLocation type="plasmid">
    <name>pHM300</name>
</geneLocation>
<dbReference type="EMBL" id="EU374220">
    <property type="protein sequence ID" value="ACB10368.2"/>
    <property type="molecule type" value="Genomic_DNA"/>
</dbReference>
<dbReference type="EMBL" id="JN980969">
    <property type="protein sequence ID" value="AEU08668.1"/>
    <property type="molecule type" value="Genomic_DNA"/>
</dbReference>
<dbReference type="EMBL" id="CP001870">
    <property type="protein sequence ID" value="AFK21052.1"/>
    <property type="molecule type" value="Genomic_DNA"/>
</dbReference>
<dbReference type="EMBL" id="AOLO01000001">
    <property type="protein sequence ID" value="EMA05163.1"/>
    <property type="molecule type" value="Genomic_DNA"/>
</dbReference>
<dbReference type="EMBL" id="CP007553">
    <property type="protein sequence ID" value="AHZ24088.1"/>
    <property type="molecule type" value="Genomic_DNA"/>
</dbReference>
<dbReference type="RefSeq" id="WP_004056140.1">
    <property type="nucleotide sequence ID" value="NC_017943.1"/>
</dbReference>
<dbReference type="SMR" id="I3R9Z2"/>
<dbReference type="GeneID" id="40158348"/>
<dbReference type="KEGG" id="hme:HFX_5219"/>
<dbReference type="PATRIC" id="fig|523841.21.peg.28"/>
<dbReference type="HOGENOM" id="CLU_111886_0_0_2"/>
<dbReference type="OrthoDB" id="178099at2157"/>
<dbReference type="Proteomes" id="UP000006469">
    <property type="component" value="Plasmid pHM300"/>
</dbReference>
<dbReference type="Proteomes" id="UP000011603">
    <property type="component" value="Unassembled WGS sequence"/>
</dbReference>
<dbReference type="Proteomes" id="UP000027075">
    <property type="component" value="Plasmid HMPLAS2"/>
</dbReference>
<proteinExistence type="predicted"/>
<reference key="1">
    <citation type="journal article" date="2008" name="J. Bacteriol.">
        <title>Genetic and biochemical characterization of the poly(3-hydroxybutyrate-co-3-hydroxyvalerate) synthase in Haloferax mediterranei.</title>
        <authorList>
            <person name="Lu Q."/>
            <person name="Han J."/>
            <person name="Zhou L."/>
            <person name="Zhou J."/>
            <person name="Xiang H."/>
        </authorList>
    </citation>
    <scope>NUCLEOTIDE SEQUENCE [GENOMIC DNA]</scope>
    <source>
        <strain>ATCC 33500 / DSM 1411 / JCM 8866 / NBRC 14739 / NCIMB 2177 / R-4</strain>
    </source>
</reference>
<reference key="2">
    <citation type="journal article" date="2012" name="Appl. Environ. Microbiol.">
        <title>Identification of the haloarchaeal phasin (PhaP) that functions in polyhydroxyalkanoate accumulation and granule formation in Haloferax mediterranei.</title>
        <authorList>
            <person name="Cai S."/>
            <person name="Cai L."/>
            <person name="Liu H."/>
            <person name="Liu X."/>
            <person name="Han J."/>
            <person name="Zhou J."/>
            <person name="Xiang H."/>
        </authorList>
    </citation>
    <scope>NUCLEOTIDE SEQUENCE [GENOMIC DNA]</scope>
    <scope>FUNCTION</scope>
    <scope>SUBCELLULAR LOCATION</scope>
    <scope>DISRUPTION PHENOTYPE</scope>
    <source>
        <strain>ATCC 33500 / DSM 1411 / JCM 8866 / NBRC 14739 / NCIMB 2177 / R-4</strain>
    </source>
</reference>
<reference key="3">
    <citation type="journal article" date="2012" name="J. Bacteriol.">
        <title>Complete genome sequence of the metabolically versatile halophilic archaeon Haloferax mediterranei, a poly(3-hydroxybutyrate-co-3-hydroxyvalerate) producer.</title>
        <authorList>
            <person name="Han J."/>
            <person name="Zhang F."/>
            <person name="Hou J."/>
            <person name="Liu X."/>
            <person name="Li M."/>
            <person name="Liu H."/>
            <person name="Cai L."/>
            <person name="Zhang B."/>
            <person name="Chen Y."/>
            <person name="Zhou J."/>
            <person name="Hu S."/>
            <person name="Xiang H."/>
        </authorList>
    </citation>
    <scope>NUCLEOTIDE SEQUENCE [LARGE SCALE GENOMIC DNA]</scope>
    <source>
        <strain>ATCC 33500 / DSM 1411 / JCM 8866 / NBRC 14739 / NCIMB 2177 / R-4</strain>
        <plasmid>pHM300</plasmid>
    </source>
</reference>
<reference key="4">
    <citation type="journal article" date="2014" name="PLoS Genet.">
        <title>Phylogenetically driven sequencing of extremely halophilic archaea reveals strategies for static and dynamic osmo-response.</title>
        <authorList>
            <person name="Becker E.A."/>
            <person name="Seitzer P.M."/>
            <person name="Tritt A."/>
            <person name="Larsen D."/>
            <person name="Krusor M."/>
            <person name="Yao A.I."/>
            <person name="Wu D."/>
            <person name="Madern D."/>
            <person name="Eisen J.A."/>
            <person name="Darling A.E."/>
            <person name="Facciotti M.T."/>
        </authorList>
    </citation>
    <scope>NUCLEOTIDE SEQUENCE [LARGE SCALE GENOMIC DNA]</scope>
    <source>
        <strain>ATCC 33500 / DSM 1411 / JCM 8866 / NBRC 14739 / NCIMB 2177 / R-4</strain>
    </source>
</reference>
<reference key="5">
    <citation type="submission" date="2014-04" db="EMBL/GenBank/DDBJ databases">
        <title>Transcriptional profiles of Haloferax mediterranei on the basis of nitrogen availability.</title>
        <authorList>
            <person name="Bautista V."/>
        </authorList>
    </citation>
    <scope>NUCLEOTIDE SEQUENCE [LARGE SCALE GENOMIC DNA]</scope>
    <source>
        <strain>ATCC 33500 / DSM 1411 / JCM 8866 / NBRC 14739 / NCIMB 2177 / R-4</strain>
        <plasmid>HMPLAS2</plasmid>
    </source>
</reference>
<accession>I3R9Z2</accession>
<accession>B3FRM3</accession>